<feature type="chain" id="PRO_0000272278" description="Protein CLASP-1">
    <location>
        <begin position="1"/>
        <end position="1378"/>
    </location>
</feature>
<feature type="repeat" description="HEAT 1">
    <location>
        <begin position="168"/>
        <end position="206"/>
    </location>
</feature>
<feature type="repeat" description="HEAT 2">
    <location>
        <begin position="1305"/>
        <end position="1341"/>
    </location>
</feature>
<feature type="region of interest" description="Disordered" evidence="3">
    <location>
        <begin position="231"/>
        <end position="254"/>
    </location>
</feature>
<feature type="region of interest" description="Disordered" evidence="3">
    <location>
        <begin position="266"/>
        <end position="325"/>
    </location>
</feature>
<feature type="region of interest" description="Disordered" evidence="3">
    <location>
        <begin position="590"/>
        <end position="725"/>
    </location>
</feature>
<feature type="region of interest" description="Disordered" evidence="3">
    <location>
        <begin position="775"/>
        <end position="823"/>
    </location>
</feature>
<feature type="coiled-coil region" evidence="2">
    <location>
        <begin position="740"/>
        <end position="767"/>
    </location>
</feature>
<feature type="compositionally biased region" description="Low complexity" evidence="3">
    <location>
        <begin position="269"/>
        <end position="283"/>
    </location>
</feature>
<feature type="compositionally biased region" description="Low complexity" evidence="3">
    <location>
        <begin position="610"/>
        <end position="619"/>
    </location>
</feature>
<feature type="compositionally biased region" description="Polar residues" evidence="3">
    <location>
        <begin position="620"/>
        <end position="630"/>
    </location>
</feature>
<feature type="compositionally biased region" description="Polar residues" evidence="3">
    <location>
        <begin position="637"/>
        <end position="648"/>
    </location>
</feature>
<feature type="compositionally biased region" description="Low complexity" evidence="3">
    <location>
        <begin position="664"/>
        <end position="676"/>
    </location>
</feature>
<feature type="compositionally biased region" description="Polar residues" evidence="3">
    <location>
        <begin position="677"/>
        <end position="690"/>
    </location>
</feature>
<feature type="compositionally biased region" description="Low complexity" evidence="3">
    <location>
        <begin position="704"/>
        <end position="721"/>
    </location>
</feature>
<feature type="compositionally biased region" description="Basic and acidic residues" evidence="3">
    <location>
        <begin position="775"/>
        <end position="784"/>
    </location>
</feature>
<feature type="compositionally biased region" description="Polar residues" evidence="3">
    <location>
        <begin position="786"/>
        <end position="812"/>
    </location>
</feature>
<keyword id="KW-0131">Cell cycle</keyword>
<keyword id="KW-0132">Cell division</keyword>
<keyword id="KW-0175">Coiled coil</keyword>
<keyword id="KW-0963">Cytoplasm</keyword>
<keyword id="KW-0206">Cytoskeleton</keyword>
<keyword id="KW-0493">Microtubule</keyword>
<keyword id="KW-1185">Reference proteome</keyword>
<keyword id="KW-0677">Repeat</keyword>
<protein>
    <recommendedName>
        <fullName>Protein CLASP-1</fullName>
    </recommendedName>
</protein>
<evidence type="ECO:0000250" key="1"/>
<evidence type="ECO:0000255" key="2"/>
<evidence type="ECO:0000256" key="3">
    <source>
        <dbReference type="SAM" id="MobiDB-lite"/>
    </source>
</evidence>
<evidence type="ECO:0000269" key="4">
    <source>
    </source>
</evidence>
<evidence type="ECO:0000305" key="5"/>
<accession>Q95YF0</accession>
<proteinExistence type="inferred from homology"/>
<gene>
    <name type="primary">cls-1</name>
    <name type="ORF">C07H6.3</name>
</gene>
<comment type="function">
    <text evidence="1 4">Microtubule plus-end tracking protein that promotes the stabilization of dynamic microtubules (By similarity). Operates redundantly with cls-2 and cls-3 in regulating microtubule processes which position the spindle during asymmetric cell division.</text>
</comment>
<comment type="subcellular location">
    <subcellularLocation>
        <location evidence="1">Cytoplasm</location>
        <location evidence="1">Cytoskeleton</location>
    </subcellularLocation>
</comment>
<comment type="disruption phenotype">
    <text evidence="4">No visible phenotype; due to the redundancy with cls-2 and cls-3. Simultaneous RNAi knockdown with cls-2 produces defective microtubule cortical contacts resulting in abnormal nuclear rotation, defects in maintenance of spindle length and spindle displacement. Simultaneous RNAi knockdown with cls-2 and cls-3 shows nuclear rotation defects and excessive spindle displacement.</text>
</comment>
<comment type="similarity">
    <text evidence="5">Belongs to the CLASP family.</text>
</comment>
<sequence>MDTNWLYVLLQKSTADPLERLKLGNVILNEVSQRKVSPHPKLVNDFLDVMSGWLTGSNFKVSTIGLEILDAALRTSPDVLASYYFDRCSVLIERMGDAKVQVREMAINLCLQLAYLENSSPVMLLDRLCVPGTGFQHKQWLVKVGSLNILREFLSSSFALVIQQAITLIPQLCRLTNDPNSEVRDVSTQCLIDLMVYGGKPIVAKIAATRLINEQKMATLLQRYQTTVATRGDLPPKHTITMETTPAQPSRNSLLRRSLRSPAKIIHPSASTTSFTSSARLSTPPRPTTTAAQSLSLAPQTPSPLSLPSPSGGQMSRSRDLTRSSLRAPAGISISRYRSSSCAPAAQCAITLDDFKKSFTAVPKTTIYSNHDIREKLELANLVLRNANEDWSKRANQLKLIRSIIINCDENIDRSLLISIINELADALEFSIRDLRSQIVREAAVTCSFLFETFGMEVKNVAECVLPAALAQVAVSTKVIASSAATLTVFIVQKIQTRQIFTTLSELSSSKAKEQRRQLAVVLETLIASWDLKSKQPILKQIAQLVQNAICDADGETRVAGRKAFAKLEQLHGTTADLIFRELDPAKQKMLRDGVSSSSSSLNSDRDNNNQKQQPNQQNISQKFLSQRSASAVDKSIQLSVKPQTTAIPSRPTAMPMNNRLPKSSTSTSFSAVRSSGYGQNQSTTPNRAKTPSDGFAGSSPHYTNGNNNNKSSSSSPSTSTHQTPIQRVASNLGSSSFVASLTQEQANCLQNAMNTAKDEMSKNNEDDEFLLDEIRKTPPKEVPRSYNNSPFKPSNLDSSVHRSYNNNSPFRPSSGSVGSGSNGSVQSIEHILKACTSSSLNEKRDAIVNLNQVITDPNLCQLECKNIGDTLSRLLAEGNNTLIISILDTISIFIKFQYKKLDNWLKLALGKLFAKMGADALPNVKSALSSTQKMFLTTFDPTFQLKAVCDFMCDPVHLLSPKSRLALLEYICLLFEEIWPEDPRCLERQTHLDTPYTRAAIRKMFAWMFDPRIGAILMPACERLVCALFALNAADFTMIFGELPSECRDWAYRILQLNGQQNNQKPIEKEKERFISNNNYKPCPLDNEEIEKPIMKTTYSTYESTRKEYSQTERIATENQYSTPPPPDYRTSTAHLAKNHVDQAAYIRNQLDAIRDFEKADKLNEAMANLHGMMCEGSFTLWNQFFDELLDSIYQILSTFSQSIRKKLALRILQKMCTAQATKLFDSTEIAISKVLQCACTSDDNTMGVAAEDCLRILASHLPLTRVVLISRRILSQDDDDQRGVLILKMLTRMFQDIDIEELHLIVNDVAPCFVTAYESMSSTVRKCAVFGLVALVQRVGMQRMEPHLRTLNASKLNLIDLYVGRAKSSESGASSN</sequence>
<name>CLAP1_CAEEL</name>
<organism>
    <name type="scientific">Caenorhabditis elegans</name>
    <dbReference type="NCBI Taxonomy" id="6239"/>
    <lineage>
        <taxon>Eukaryota</taxon>
        <taxon>Metazoa</taxon>
        <taxon>Ecdysozoa</taxon>
        <taxon>Nematoda</taxon>
        <taxon>Chromadorea</taxon>
        <taxon>Rhabditida</taxon>
        <taxon>Rhabditina</taxon>
        <taxon>Rhabditomorpha</taxon>
        <taxon>Rhabditoidea</taxon>
        <taxon>Rhabditidae</taxon>
        <taxon>Peloderinae</taxon>
        <taxon>Caenorhabditis</taxon>
    </lineage>
</organism>
<reference key="1">
    <citation type="journal article" date="1998" name="Science">
        <title>Genome sequence of the nematode C. elegans: a platform for investigating biology.</title>
        <authorList>
            <consortium name="The C. elegans sequencing consortium"/>
        </authorList>
    </citation>
    <scope>NUCLEOTIDE SEQUENCE [LARGE SCALE GENOMIC DNA]</scope>
    <source>
        <strain>Bristol N2</strain>
    </source>
</reference>
<reference key="2">
    <citation type="journal article" date="2012" name="Dev. Biol.">
        <title>CLASPs function redundantly to regulate astral microtubules in the C. elegans embryo.</title>
        <authorList>
            <person name="Espiritu E.B."/>
            <person name="Krueger L.E."/>
            <person name="Ye A."/>
            <person name="Rose L.S."/>
        </authorList>
    </citation>
    <scope>FUNCTION</scope>
    <scope>DISRUPTION PHENOTYPE</scope>
</reference>
<dbReference type="EMBL" id="FO080423">
    <property type="protein sequence ID" value="CCD63590.1"/>
    <property type="molecule type" value="Genomic_DNA"/>
</dbReference>
<dbReference type="RefSeq" id="NP_498649.1">
    <property type="nucleotide sequence ID" value="NM_066248.5"/>
</dbReference>
<dbReference type="BioGRID" id="41272">
    <property type="interactions" value="1"/>
</dbReference>
<dbReference type="FunCoup" id="Q95YF0">
    <property type="interactions" value="2227"/>
</dbReference>
<dbReference type="STRING" id="6239.C07H6.3.1"/>
<dbReference type="PaxDb" id="6239-C07H6.3"/>
<dbReference type="PeptideAtlas" id="Q95YF0"/>
<dbReference type="EnsemblMetazoa" id="C07H6.3.1">
    <property type="protein sequence ID" value="C07H6.3.1"/>
    <property type="gene ID" value="WBGene00015580"/>
</dbReference>
<dbReference type="GeneID" id="176064"/>
<dbReference type="KEGG" id="cel:CELE_C07H6.3"/>
<dbReference type="UCSC" id="C07H6.3">
    <property type="organism name" value="c. elegans"/>
</dbReference>
<dbReference type="AGR" id="WB:WBGene00015580"/>
<dbReference type="CTD" id="176064"/>
<dbReference type="WormBase" id="C07H6.3">
    <property type="protein sequence ID" value="CE29074"/>
    <property type="gene ID" value="WBGene00015580"/>
    <property type="gene designation" value="cls-1"/>
</dbReference>
<dbReference type="eggNOG" id="KOG2956">
    <property type="taxonomic scope" value="Eukaryota"/>
</dbReference>
<dbReference type="GeneTree" id="ENSGT00940000168069"/>
<dbReference type="HOGENOM" id="CLU_005060_1_0_1"/>
<dbReference type="InParanoid" id="Q95YF0"/>
<dbReference type="OMA" id="WMFDPRI"/>
<dbReference type="OrthoDB" id="46159at2759"/>
<dbReference type="PhylomeDB" id="Q95YF0"/>
<dbReference type="PRO" id="PR:Q95YF0"/>
<dbReference type="Proteomes" id="UP000001940">
    <property type="component" value="Chromosome III"/>
</dbReference>
<dbReference type="Bgee" id="WBGene00015580">
    <property type="expression patterns" value="Expressed in material anatomical entity and 4 other cell types or tissues"/>
</dbReference>
<dbReference type="GO" id="GO:0045180">
    <property type="term" value="C:basal cortex"/>
    <property type="evidence" value="ECO:0000318"/>
    <property type="project" value="GO_Central"/>
</dbReference>
<dbReference type="GO" id="GO:0005881">
    <property type="term" value="C:cytoplasmic microtubule"/>
    <property type="evidence" value="ECO:0000318"/>
    <property type="project" value="GO_Central"/>
</dbReference>
<dbReference type="GO" id="GO:0000776">
    <property type="term" value="C:kinetochore"/>
    <property type="evidence" value="ECO:0000318"/>
    <property type="project" value="GO_Central"/>
</dbReference>
<dbReference type="GO" id="GO:0005815">
    <property type="term" value="C:microtubule organizing center"/>
    <property type="evidence" value="ECO:0000318"/>
    <property type="project" value="GO_Central"/>
</dbReference>
<dbReference type="GO" id="GO:0072686">
    <property type="term" value="C:mitotic spindle"/>
    <property type="evidence" value="ECO:0000318"/>
    <property type="project" value="GO_Central"/>
</dbReference>
<dbReference type="GO" id="GO:0005876">
    <property type="term" value="C:spindle microtubule"/>
    <property type="evidence" value="ECO:0000318"/>
    <property type="project" value="GO_Central"/>
</dbReference>
<dbReference type="GO" id="GO:0008017">
    <property type="term" value="F:microtubule binding"/>
    <property type="evidence" value="ECO:0000318"/>
    <property type="project" value="GO_Central"/>
</dbReference>
<dbReference type="GO" id="GO:0030953">
    <property type="term" value="P:astral microtubule organization"/>
    <property type="evidence" value="ECO:0000316"/>
    <property type="project" value="UniProtKB"/>
</dbReference>
<dbReference type="GO" id="GO:0051301">
    <property type="term" value="P:cell division"/>
    <property type="evidence" value="ECO:0007669"/>
    <property type="project" value="UniProtKB-KW"/>
</dbReference>
<dbReference type="GO" id="GO:0040001">
    <property type="term" value="P:establishment of mitotic spindle localization"/>
    <property type="evidence" value="ECO:0000316"/>
    <property type="project" value="WormBase"/>
</dbReference>
<dbReference type="GO" id="GO:0090307">
    <property type="term" value="P:mitotic spindle assembly"/>
    <property type="evidence" value="ECO:0000318"/>
    <property type="project" value="GO_Central"/>
</dbReference>
<dbReference type="GO" id="GO:0031117">
    <property type="term" value="P:positive regulation of microtubule depolymerization"/>
    <property type="evidence" value="ECO:0000315"/>
    <property type="project" value="WormBase"/>
</dbReference>
<dbReference type="GO" id="GO:0051231">
    <property type="term" value="P:spindle elongation"/>
    <property type="evidence" value="ECO:0000316"/>
    <property type="project" value="UniProtKB"/>
</dbReference>
<dbReference type="FunFam" id="1.25.10.10:FF:000607">
    <property type="entry name" value="Protein CLASP-2"/>
    <property type="match status" value="1"/>
</dbReference>
<dbReference type="Gene3D" id="1.25.10.10">
    <property type="entry name" value="Leucine-rich Repeat Variant"/>
    <property type="match status" value="4"/>
</dbReference>
<dbReference type="InterPro" id="IPR011989">
    <property type="entry name" value="ARM-like"/>
</dbReference>
<dbReference type="InterPro" id="IPR016024">
    <property type="entry name" value="ARM-type_fold"/>
</dbReference>
<dbReference type="InterPro" id="IPR024395">
    <property type="entry name" value="CLASP_N_dom"/>
</dbReference>
<dbReference type="InterPro" id="IPR000357">
    <property type="entry name" value="HEAT"/>
</dbReference>
<dbReference type="InterPro" id="IPR021133">
    <property type="entry name" value="HEAT_type_2"/>
</dbReference>
<dbReference type="InterPro" id="IPR034085">
    <property type="entry name" value="TOG"/>
</dbReference>
<dbReference type="PANTHER" id="PTHR21567">
    <property type="entry name" value="CLASP"/>
    <property type="match status" value="1"/>
</dbReference>
<dbReference type="PANTHER" id="PTHR21567:SF56">
    <property type="entry name" value="PROTEIN CLASP-1"/>
    <property type="match status" value="1"/>
</dbReference>
<dbReference type="Pfam" id="PF12348">
    <property type="entry name" value="CLASP_N"/>
    <property type="match status" value="1"/>
</dbReference>
<dbReference type="Pfam" id="PF02985">
    <property type="entry name" value="HEAT"/>
    <property type="match status" value="1"/>
</dbReference>
<dbReference type="SMART" id="SM01349">
    <property type="entry name" value="TOG"/>
    <property type="match status" value="3"/>
</dbReference>
<dbReference type="SUPFAM" id="SSF48371">
    <property type="entry name" value="ARM repeat"/>
    <property type="match status" value="2"/>
</dbReference>
<dbReference type="PROSITE" id="PS50077">
    <property type="entry name" value="HEAT_REPEAT"/>
    <property type="match status" value="1"/>
</dbReference>